<reference key="1">
    <citation type="journal article" date="2004" name="Mol. Endocrinol.">
        <title>Corticosteroid binding globulin: a new target for cortisol-driven obesity.</title>
        <authorList>
            <person name="Ousova O."/>
            <person name="Guyonnet-Duperat V."/>
            <person name="Iannuccelli N."/>
            <person name="Bidanel J.-P."/>
            <person name="Milan D."/>
            <person name="Genet C."/>
            <person name="Llamas B."/>
            <person name="Yerle M."/>
            <person name="Gellin J."/>
            <person name="Chardon P."/>
            <person name="Emptoz-Bonneton A."/>
            <person name="Pugeat M."/>
            <person name="Mormede P."/>
            <person name="Moisan M.-P."/>
        </authorList>
    </citation>
    <scope>NUCLEOTIDE SEQUENCE [MRNA]</scope>
    <scope>FUNCTION</scope>
    <scope>SUBCELLULAR LOCATION</scope>
    <source>
        <strain>Large white</strain>
        <tissue>Liver</tissue>
    </source>
</reference>
<proteinExistence type="evidence at transcript level"/>
<gene>
    <name type="primary">Serpina6</name>
    <name type="synonym">Cbg</name>
</gene>
<accession>Q9GK37</accession>
<comment type="function">
    <text evidence="3">Major transport protein for glucocorticoids and progestins in the blood of almost all vertebrate species.</text>
</comment>
<comment type="subcellular location">
    <subcellularLocation>
        <location evidence="3">Secreted</location>
    </subcellularLocation>
</comment>
<comment type="domain">
    <text evidence="1">Proteolytic cleavage leads to an important conformation change. This reduces the affinity for steroids (By similarity).</text>
</comment>
<comment type="similarity">
    <text evidence="4">Belongs to the serpin family.</text>
</comment>
<keyword id="KW-0325">Glycoprotein</keyword>
<keyword id="KW-0446">Lipid-binding</keyword>
<keyword id="KW-1185">Reference proteome</keyword>
<keyword id="KW-0964">Secreted</keyword>
<keyword id="KW-0732">Signal</keyword>
<keyword id="KW-0754">Steroid-binding</keyword>
<keyword id="KW-0813">Transport</keyword>
<organism>
    <name type="scientific">Sus scrofa</name>
    <name type="common">Pig</name>
    <dbReference type="NCBI Taxonomy" id="9823"/>
    <lineage>
        <taxon>Eukaryota</taxon>
        <taxon>Metazoa</taxon>
        <taxon>Chordata</taxon>
        <taxon>Craniata</taxon>
        <taxon>Vertebrata</taxon>
        <taxon>Euteleostomi</taxon>
        <taxon>Mammalia</taxon>
        <taxon>Eutheria</taxon>
        <taxon>Laurasiatheria</taxon>
        <taxon>Artiodactyla</taxon>
        <taxon>Suina</taxon>
        <taxon>Suidae</taxon>
        <taxon>Sus</taxon>
    </lineage>
</organism>
<evidence type="ECO:0000250" key="1"/>
<evidence type="ECO:0000255" key="2"/>
<evidence type="ECO:0000269" key="3">
    <source>
    </source>
</evidence>
<evidence type="ECO:0000305" key="4"/>
<protein>
    <recommendedName>
        <fullName>Corticosteroid-binding globulin</fullName>
        <shortName>CBG</shortName>
    </recommendedName>
    <alternativeName>
        <fullName>Serpin A6</fullName>
    </alternativeName>
    <alternativeName>
        <fullName>Transcortin</fullName>
    </alternativeName>
</protein>
<sequence length="406" mass="45189">MLLTLYACLLWLSTSGLWTSQAKDPDSDLSTRSRHRNLAPNNVDFAFALYKHLVASAPGKDVFLSPVSISTALAMLSLGASGYTREQLLQGLGFNLTETPEAEIHQDFQHLHSLLKGSNITSEMTMGNALFLDRSLELLESFSTGSKHYYGLEALAADFQDWAGASRQINEYIKNKTQGKIVDLFLEQDSSAMLILINYIFFKGTWTHSFPPESTREENFYVNETATVKVPMMFQSRAMKYLNDSLLPCQLVQLEYTGNETAFFILPVKGEMDTVIAGLSRDTIQRWSKSLIPSQVDLYVPKVSISGAYDLGSILGDMGIVDLLSHPTHFSGITQNALPKMSKVVHKAVLQFDEKGMEAAAPTTRGRSLHAAPKPVTVHFNRPFIVMVFDHFTWSSLFLGKIVNLT</sequence>
<feature type="signal peptide" evidence="1">
    <location>
        <begin position="1"/>
        <end position="22"/>
    </location>
</feature>
<feature type="chain" id="PRO_5000058801" description="Corticosteroid-binding globulin">
    <location>
        <begin position="23"/>
        <end position="406"/>
    </location>
</feature>
<feature type="binding site" evidence="1">
    <location>
        <position position="253"/>
    </location>
    <ligand>
        <name>cortisol</name>
        <dbReference type="ChEBI" id="CHEBI:17650"/>
    </ligand>
</feature>
<feature type="binding site" evidence="1">
    <location>
        <position position="285"/>
    </location>
    <ligand>
        <name>cortisol</name>
        <dbReference type="ChEBI" id="CHEBI:17650"/>
    </ligand>
</feature>
<feature type="binding site" evidence="1">
    <location>
        <position position="394"/>
    </location>
    <ligand>
        <name>cortisol</name>
        <dbReference type="ChEBI" id="CHEBI:17650"/>
    </ligand>
</feature>
<feature type="site" description="Conserved cysteine within steroid binding domain">
    <location>
        <position position="249"/>
    </location>
</feature>
<feature type="glycosylation site" description="N-linked (GlcNAc...) asparagine" evidence="2">
    <location>
        <position position="95"/>
    </location>
</feature>
<feature type="glycosylation site" description="N-linked (GlcNAc...) asparagine" evidence="2">
    <location>
        <position position="119"/>
    </location>
</feature>
<feature type="glycosylation site" description="N-linked (GlcNAc...) asparagine" evidence="2">
    <location>
        <position position="223"/>
    </location>
</feature>
<feature type="glycosylation site" description="N-linked (GlcNAc...) asparagine" evidence="2">
    <location>
        <position position="259"/>
    </location>
</feature>
<name>CBG_PIG</name>
<dbReference type="EMBL" id="AF324155">
    <property type="protein sequence ID" value="AAG45431.1"/>
    <property type="molecule type" value="mRNA"/>
</dbReference>
<dbReference type="RefSeq" id="NP_998977.1">
    <property type="nucleotide sequence ID" value="NM_213812.1"/>
</dbReference>
<dbReference type="SMR" id="Q9GK37"/>
<dbReference type="FunCoup" id="Q9GK37">
    <property type="interactions" value="198"/>
</dbReference>
<dbReference type="STRING" id="9823.ENSSSCP00000002680"/>
<dbReference type="ChEMBL" id="CHEMBL3449"/>
<dbReference type="MEROPS" id="I04.954"/>
<dbReference type="GlyCosmos" id="Q9GK37">
    <property type="glycosylation" value="4 sites, No reported glycans"/>
</dbReference>
<dbReference type="GlyGen" id="Q9GK37">
    <property type="glycosylation" value="4 sites"/>
</dbReference>
<dbReference type="PaxDb" id="9823-ENSSSCP00000002680"/>
<dbReference type="PeptideAtlas" id="Q9GK37"/>
<dbReference type="Ensembl" id="ENSSSCT00115028567">
    <property type="protein sequence ID" value="ENSSSCP00115027095"/>
    <property type="gene ID" value="ENSSSCG00115016314"/>
</dbReference>
<dbReference type="GeneID" id="396736"/>
<dbReference type="KEGG" id="ssc:396736"/>
<dbReference type="CTD" id="866"/>
<dbReference type="eggNOG" id="KOG2392">
    <property type="taxonomic scope" value="Eukaryota"/>
</dbReference>
<dbReference type="InParanoid" id="Q9GK37"/>
<dbReference type="OrthoDB" id="671595at2759"/>
<dbReference type="Proteomes" id="UP000008227">
    <property type="component" value="Unplaced"/>
</dbReference>
<dbReference type="Proteomes" id="UP000314985">
    <property type="component" value="Unplaced"/>
</dbReference>
<dbReference type="Proteomes" id="UP000694570">
    <property type="component" value="Unplaced"/>
</dbReference>
<dbReference type="Proteomes" id="UP000694571">
    <property type="component" value="Unplaced"/>
</dbReference>
<dbReference type="Proteomes" id="UP000694720">
    <property type="component" value="Unplaced"/>
</dbReference>
<dbReference type="Proteomes" id="UP000694722">
    <property type="component" value="Unplaced"/>
</dbReference>
<dbReference type="Proteomes" id="UP000694723">
    <property type="component" value="Unplaced"/>
</dbReference>
<dbReference type="Proteomes" id="UP000694724">
    <property type="component" value="Unplaced"/>
</dbReference>
<dbReference type="Proteomes" id="UP000694725">
    <property type="component" value="Unplaced"/>
</dbReference>
<dbReference type="Proteomes" id="UP000694726">
    <property type="component" value="Unplaced"/>
</dbReference>
<dbReference type="Proteomes" id="UP000694727">
    <property type="component" value="Unplaced"/>
</dbReference>
<dbReference type="Proteomes" id="UP000694728">
    <property type="component" value="Unplaced"/>
</dbReference>
<dbReference type="GO" id="GO:0005615">
    <property type="term" value="C:extracellular space"/>
    <property type="evidence" value="ECO:0000318"/>
    <property type="project" value="GO_Central"/>
</dbReference>
<dbReference type="GO" id="GO:0004867">
    <property type="term" value="F:serine-type endopeptidase inhibitor activity"/>
    <property type="evidence" value="ECO:0000318"/>
    <property type="project" value="GO_Central"/>
</dbReference>
<dbReference type="GO" id="GO:0005496">
    <property type="term" value="F:steroid binding"/>
    <property type="evidence" value="ECO:0000250"/>
    <property type="project" value="UniProtKB"/>
</dbReference>
<dbReference type="CDD" id="cd19554">
    <property type="entry name" value="serpinA6_CBG"/>
    <property type="match status" value="1"/>
</dbReference>
<dbReference type="FunFam" id="3.30.497.10:FF:000001">
    <property type="entry name" value="Serine protease inhibitor"/>
    <property type="match status" value="1"/>
</dbReference>
<dbReference type="FunFam" id="2.30.39.10:FF:000002">
    <property type="entry name" value="Serpin family D member 1"/>
    <property type="match status" value="1"/>
</dbReference>
<dbReference type="Gene3D" id="2.30.39.10">
    <property type="entry name" value="Alpha-1-antitrypsin, domain 1"/>
    <property type="match status" value="1"/>
</dbReference>
<dbReference type="Gene3D" id="3.30.497.10">
    <property type="entry name" value="Antithrombin, subunit I, domain 2"/>
    <property type="match status" value="1"/>
</dbReference>
<dbReference type="InterPro" id="IPR023795">
    <property type="entry name" value="Serpin_CS"/>
</dbReference>
<dbReference type="InterPro" id="IPR023796">
    <property type="entry name" value="Serpin_dom"/>
</dbReference>
<dbReference type="InterPro" id="IPR000215">
    <property type="entry name" value="Serpin_fam"/>
</dbReference>
<dbReference type="InterPro" id="IPR036186">
    <property type="entry name" value="Serpin_sf"/>
</dbReference>
<dbReference type="InterPro" id="IPR042178">
    <property type="entry name" value="Serpin_sf_1"/>
</dbReference>
<dbReference type="InterPro" id="IPR042185">
    <property type="entry name" value="Serpin_sf_2"/>
</dbReference>
<dbReference type="PANTHER" id="PTHR11461:SF34">
    <property type="entry name" value="CORTICOSTEROID-BINDING GLOBULIN"/>
    <property type="match status" value="1"/>
</dbReference>
<dbReference type="PANTHER" id="PTHR11461">
    <property type="entry name" value="SERINE PROTEASE INHIBITOR, SERPIN"/>
    <property type="match status" value="1"/>
</dbReference>
<dbReference type="Pfam" id="PF00079">
    <property type="entry name" value="Serpin"/>
    <property type="match status" value="1"/>
</dbReference>
<dbReference type="PRINTS" id="PR00780">
    <property type="entry name" value="LEUSERPINII"/>
</dbReference>
<dbReference type="SMART" id="SM00093">
    <property type="entry name" value="SERPIN"/>
    <property type="match status" value="1"/>
</dbReference>
<dbReference type="SUPFAM" id="SSF56574">
    <property type="entry name" value="Serpins"/>
    <property type="match status" value="1"/>
</dbReference>
<dbReference type="PROSITE" id="PS00284">
    <property type="entry name" value="SERPIN"/>
    <property type="match status" value="1"/>
</dbReference>